<accession>C3K0M9</accession>
<comment type="function">
    <text evidence="1">Phosphorylation of dTMP to form dTDP in both de novo and salvage pathways of dTTP synthesis.</text>
</comment>
<comment type="catalytic activity">
    <reaction evidence="1">
        <text>dTMP + ATP = dTDP + ADP</text>
        <dbReference type="Rhea" id="RHEA:13517"/>
        <dbReference type="ChEBI" id="CHEBI:30616"/>
        <dbReference type="ChEBI" id="CHEBI:58369"/>
        <dbReference type="ChEBI" id="CHEBI:63528"/>
        <dbReference type="ChEBI" id="CHEBI:456216"/>
        <dbReference type="EC" id="2.7.4.9"/>
    </reaction>
</comment>
<comment type="similarity">
    <text evidence="1">Belongs to the thymidylate kinase family.</text>
</comment>
<evidence type="ECO:0000255" key="1">
    <source>
        <dbReference type="HAMAP-Rule" id="MF_00165"/>
    </source>
</evidence>
<reference key="1">
    <citation type="journal article" date="2009" name="Genome Biol.">
        <title>Genomic and genetic analyses of diversity and plant interactions of Pseudomonas fluorescens.</title>
        <authorList>
            <person name="Silby M.W."/>
            <person name="Cerdeno-Tarraga A.M."/>
            <person name="Vernikos G.S."/>
            <person name="Giddens S.R."/>
            <person name="Jackson R.W."/>
            <person name="Preston G.M."/>
            <person name="Zhang X.-X."/>
            <person name="Moon C.D."/>
            <person name="Gehrig S.M."/>
            <person name="Godfrey S.A.C."/>
            <person name="Knight C.G."/>
            <person name="Malone J.G."/>
            <person name="Robinson Z."/>
            <person name="Spiers A.J."/>
            <person name="Harris S."/>
            <person name="Challis G.L."/>
            <person name="Yaxley A.M."/>
            <person name="Harris D."/>
            <person name="Seeger K."/>
            <person name="Murphy L."/>
            <person name="Rutter S."/>
            <person name="Squares R."/>
            <person name="Quail M.A."/>
            <person name="Saunders E."/>
            <person name="Mavromatis K."/>
            <person name="Brettin T.S."/>
            <person name="Bentley S.D."/>
            <person name="Hothersall J."/>
            <person name="Stephens E."/>
            <person name="Thomas C.M."/>
            <person name="Parkhill J."/>
            <person name="Levy S.B."/>
            <person name="Rainey P.B."/>
            <person name="Thomson N.R."/>
        </authorList>
    </citation>
    <scope>NUCLEOTIDE SEQUENCE [LARGE SCALE GENOMIC DNA]</scope>
    <source>
        <strain>SBW25</strain>
    </source>
</reference>
<protein>
    <recommendedName>
        <fullName evidence="1">Thymidylate kinase</fullName>
        <ecNumber evidence="1">2.7.4.9</ecNumber>
    </recommendedName>
    <alternativeName>
        <fullName evidence="1">dTMP kinase</fullName>
    </alternativeName>
</protein>
<gene>
    <name evidence="1" type="primary">tmk</name>
    <name type="ordered locus">PFLU_4700</name>
</gene>
<dbReference type="EC" id="2.7.4.9" evidence="1"/>
<dbReference type="EMBL" id="AM181176">
    <property type="protein sequence ID" value="CAY51499.1"/>
    <property type="molecule type" value="Genomic_DNA"/>
</dbReference>
<dbReference type="RefSeq" id="WP_015885428.1">
    <property type="nucleotide sequence ID" value="NC_012660.1"/>
</dbReference>
<dbReference type="SMR" id="C3K0M9"/>
<dbReference type="STRING" id="294.SRM1_04100"/>
<dbReference type="GeneID" id="93466312"/>
<dbReference type="eggNOG" id="COG0125">
    <property type="taxonomic scope" value="Bacteria"/>
</dbReference>
<dbReference type="HOGENOM" id="CLU_049131_0_2_6"/>
<dbReference type="OrthoDB" id="9774907at2"/>
<dbReference type="GO" id="GO:0005829">
    <property type="term" value="C:cytosol"/>
    <property type="evidence" value="ECO:0007669"/>
    <property type="project" value="TreeGrafter"/>
</dbReference>
<dbReference type="GO" id="GO:0005524">
    <property type="term" value="F:ATP binding"/>
    <property type="evidence" value="ECO:0007669"/>
    <property type="project" value="UniProtKB-UniRule"/>
</dbReference>
<dbReference type="GO" id="GO:0004798">
    <property type="term" value="F:dTMP kinase activity"/>
    <property type="evidence" value="ECO:0007669"/>
    <property type="project" value="UniProtKB-UniRule"/>
</dbReference>
<dbReference type="GO" id="GO:0006233">
    <property type="term" value="P:dTDP biosynthetic process"/>
    <property type="evidence" value="ECO:0007669"/>
    <property type="project" value="InterPro"/>
</dbReference>
<dbReference type="GO" id="GO:0006235">
    <property type="term" value="P:dTTP biosynthetic process"/>
    <property type="evidence" value="ECO:0007669"/>
    <property type="project" value="UniProtKB-UniRule"/>
</dbReference>
<dbReference type="GO" id="GO:0006227">
    <property type="term" value="P:dUDP biosynthetic process"/>
    <property type="evidence" value="ECO:0007669"/>
    <property type="project" value="TreeGrafter"/>
</dbReference>
<dbReference type="CDD" id="cd01672">
    <property type="entry name" value="TMPK"/>
    <property type="match status" value="1"/>
</dbReference>
<dbReference type="FunFam" id="3.40.50.300:FF:000225">
    <property type="entry name" value="Thymidylate kinase"/>
    <property type="match status" value="1"/>
</dbReference>
<dbReference type="Gene3D" id="3.40.50.300">
    <property type="entry name" value="P-loop containing nucleotide triphosphate hydrolases"/>
    <property type="match status" value="1"/>
</dbReference>
<dbReference type="HAMAP" id="MF_00165">
    <property type="entry name" value="Thymidylate_kinase"/>
    <property type="match status" value="1"/>
</dbReference>
<dbReference type="InterPro" id="IPR027417">
    <property type="entry name" value="P-loop_NTPase"/>
</dbReference>
<dbReference type="InterPro" id="IPR039430">
    <property type="entry name" value="Thymidylate_kin-like_dom"/>
</dbReference>
<dbReference type="InterPro" id="IPR018095">
    <property type="entry name" value="Thymidylate_kin_CS"/>
</dbReference>
<dbReference type="InterPro" id="IPR018094">
    <property type="entry name" value="Thymidylate_kinase"/>
</dbReference>
<dbReference type="NCBIfam" id="TIGR00041">
    <property type="entry name" value="DTMP_kinase"/>
    <property type="match status" value="1"/>
</dbReference>
<dbReference type="PANTHER" id="PTHR10344">
    <property type="entry name" value="THYMIDYLATE KINASE"/>
    <property type="match status" value="1"/>
</dbReference>
<dbReference type="PANTHER" id="PTHR10344:SF4">
    <property type="entry name" value="UMP-CMP KINASE 2, MITOCHONDRIAL"/>
    <property type="match status" value="1"/>
</dbReference>
<dbReference type="Pfam" id="PF02223">
    <property type="entry name" value="Thymidylate_kin"/>
    <property type="match status" value="1"/>
</dbReference>
<dbReference type="SUPFAM" id="SSF52540">
    <property type="entry name" value="P-loop containing nucleoside triphosphate hydrolases"/>
    <property type="match status" value="1"/>
</dbReference>
<dbReference type="PROSITE" id="PS01331">
    <property type="entry name" value="THYMIDYLATE_KINASE"/>
    <property type="match status" value="1"/>
</dbReference>
<name>KTHY_PSEFS</name>
<proteinExistence type="inferred from homology"/>
<sequence>MTGLFITLEGPEGAGKSTNRDYLAERLRSEGIEVVLTREPGGTPLAERIREVLLAPGEEQMNPDTELLLVFAARAQHLAEVIRPALARGAVVICDRFTDSTYAYQGGGRGLSLARIATLETFVQGDLRPDLTLVFDLPVEVGLARASARGRLDRFELEGQAFFDAVRTAFLTRAAAEPERYYLLDAAQPLAHVQQAIDALLPTLLERARG</sequence>
<feature type="chain" id="PRO_1000203624" description="Thymidylate kinase">
    <location>
        <begin position="1"/>
        <end position="210"/>
    </location>
</feature>
<feature type="binding site" evidence="1">
    <location>
        <begin position="10"/>
        <end position="17"/>
    </location>
    <ligand>
        <name>ATP</name>
        <dbReference type="ChEBI" id="CHEBI:30616"/>
    </ligand>
</feature>
<organism>
    <name type="scientific">Pseudomonas fluorescens (strain SBW25)</name>
    <dbReference type="NCBI Taxonomy" id="216595"/>
    <lineage>
        <taxon>Bacteria</taxon>
        <taxon>Pseudomonadati</taxon>
        <taxon>Pseudomonadota</taxon>
        <taxon>Gammaproteobacteria</taxon>
        <taxon>Pseudomonadales</taxon>
        <taxon>Pseudomonadaceae</taxon>
        <taxon>Pseudomonas</taxon>
    </lineage>
</organism>
<keyword id="KW-0067">ATP-binding</keyword>
<keyword id="KW-0418">Kinase</keyword>
<keyword id="KW-0545">Nucleotide biosynthesis</keyword>
<keyword id="KW-0547">Nucleotide-binding</keyword>
<keyword id="KW-0808">Transferase</keyword>